<name>LPA1_ARATH</name>
<accession>Q9SRY4</accession>
<proteinExistence type="evidence at protein level"/>
<comment type="function">
    <text evidence="2">Chaperone required for efficient photosystem II (PSII) assembly. Binds to psbA during de novo biogenesis of PSII.</text>
</comment>
<comment type="subunit">
    <text evidence="2">Interacts with psbA, but not with psbD, petB, ALB3, LPA2 or LPA3. Is not a component of the PSII complex.</text>
</comment>
<comment type="subcellular location">
    <subcellularLocation>
        <location evidence="2">Plastid</location>
        <location evidence="2">Chloroplast thylakoid membrane</location>
        <topology evidence="2">Multi-pass membrane protein</topology>
    </subcellularLocation>
</comment>
<comment type="disruption phenotype">
    <text evidence="2">Pale-green phenotype and greatly reduced growth. Disturbed thylakoid membrane systems.</text>
</comment>
<comment type="miscellaneous">
    <text evidence="3">Accumulates even in dark-grown seedlings.</text>
</comment>
<comment type="caution">
    <text evidence="4 5">An article reported a lack of interaction with LPA2; however, this paper was later retracted.</text>
</comment>
<organism>
    <name type="scientific">Arabidopsis thaliana</name>
    <name type="common">Mouse-ear cress</name>
    <dbReference type="NCBI Taxonomy" id="3702"/>
    <lineage>
        <taxon>Eukaryota</taxon>
        <taxon>Viridiplantae</taxon>
        <taxon>Streptophyta</taxon>
        <taxon>Embryophyta</taxon>
        <taxon>Tracheophyta</taxon>
        <taxon>Spermatophyta</taxon>
        <taxon>Magnoliopsida</taxon>
        <taxon>eudicotyledons</taxon>
        <taxon>Gunneridae</taxon>
        <taxon>Pentapetalae</taxon>
        <taxon>rosids</taxon>
        <taxon>malvids</taxon>
        <taxon>Brassicales</taxon>
        <taxon>Brassicaceae</taxon>
        <taxon>Camelineae</taxon>
        <taxon>Arabidopsis</taxon>
    </lineage>
</organism>
<gene>
    <name type="primary">LPA1</name>
    <name type="ordered locus">At1g02910</name>
    <name type="ORF">F22D16.9</name>
</gene>
<evidence type="ECO:0000255" key="1"/>
<evidence type="ECO:0000269" key="2">
    <source>
    </source>
</evidence>
<evidence type="ECO:0000305" key="3">
    <source>
    </source>
</evidence>
<evidence type="ECO:0000305" key="4">
    <source>
    </source>
</evidence>
<evidence type="ECO:0000305" key="5">
    <source>
    </source>
</evidence>
<feature type="transit peptide" description="Chloroplast" evidence="1">
    <location>
        <begin position="1"/>
        <end position="92"/>
    </location>
</feature>
<feature type="chain" id="PRO_0000425143" description="Protein LOW PSII ACCUMULATION 1, chloroplastic">
    <location>
        <begin position="93"/>
        <end position="453"/>
    </location>
</feature>
<feature type="transmembrane region" description="Helical" evidence="1">
    <location>
        <begin position="202"/>
        <end position="222"/>
    </location>
</feature>
<feature type="transmembrane region" description="Helical" evidence="1">
    <location>
        <begin position="238"/>
        <end position="258"/>
    </location>
</feature>
<feature type="repeat" description="TPR 1">
    <location>
        <begin position="75"/>
        <end position="108"/>
    </location>
</feature>
<feature type="repeat" description="TPR 2">
    <location>
        <begin position="112"/>
        <end position="145"/>
    </location>
</feature>
<reference key="1">
    <citation type="journal article" date="2000" name="Nature">
        <title>Sequence and analysis of chromosome 1 of the plant Arabidopsis thaliana.</title>
        <authorList>
            <person name="Theologis A."/>
            <person name="Ecker J.R."/>
            <person name="Palm C.J."/>
            <person name="Federspiel N.A."/>
            <person name="Kaul S."/>
            <person name="White O."/>
            <person name="Alonso J."/>
            <person name="Altafi H."/>
            <person name="Araujo R."/>
            <person name="Bowman C.L."/>
            <person name="Brooks S.Y."/>
            <person name="Buehler E."/>
            <person name="Chan A."/>
            <person name="Chao Q."/>
            <person name="Chen H."/>
            <person name="Cheuk R.F."/>
            <person name="Chin C.W."/>
            <person name="Chung M.K."/>
            <person name="Conn L."/>
            <person name="Conway A.B."/>
            <person name="Conway A.R."/>
            <person name="Creasy T.H."/>
            <person name="Dewar K."/>
            <person name="Dunn P."/>
            <person name="Etgu P."/>
            <person name="Feldblyum T.V."/>
            <person name="Feng J.-D."/>
            <person name="Fong B."/>
            <person name="Fujii C.Y."/>
            <person name="Gill J.E."/>
            <person name="Goldsmith A.D."/>
            <person name="Haas B."/>
            <person name="Hansen N.F."/>
            <person name="Hughes B."/>
            <person name="Huizar L."/>
            <person name="Hunter J.L."/>
            <person name="Jenkins J."/>
            <person name="Johnson-Hopson C."/>
            <person name="Khan S."/>
            <person name="Khaykin E."/>
            <person name="Kim C.J."/>
            <person name="Koo H.L."/>
            <person name="Kremenetskaia I."/>
            <person name="Kurtz D.B."/>
            <person name="Kwan A."/>
            <person name="Lam B."/>
            <person name="Langin-Hooper S."/>
            <person name="Lee A."/>
            <person name="Lee J.M."/>
            <person name="Lenz C.A."/>
            <person name="Li J.H."/>
            <person name="Li Y.-P."/>
            <person name="Lin X."/>
            <person name="Liu S.X."/>
            <person name="Liu Z.A."/>
            <person name="Luros J.S."/>
            <person name="Maiti R."/>
            <person name="Marziali A."/>
            <person name="Militscher J."/>
            <person name="Miranda M."/>
            <person name="Nguyen M."/>
            <person name="Nierman W.C."/>
            <person name="Osborne B.I."/>
            <person name="Pai G."/>
            <person name="Peterson J."/>
            <person name="Pham P.K."/>
            <person name="Rizzo M."/>
            <person name="Rooney T."/>
            <person name="Rowley D."/>
            <person name="Sakano H."/>
            <person name="Salzberg S.L."/>
            <person name="Schwartz J.R."/>
            <person name="Shinn P."/>
            <person name="Southwick A.M."/>
            <person name="Sun H."/>
            <person name="Tallon L.J."/>
            <person name="Tambunga G."/>
            <person name="Toriumi M.J."/>
            <person name="Town C.D."/>
            <person name="Utterback T."/>
            <person name="Van Aken S."/>
            <person name="Vaysberg M."/>
            <person name="Vysotskaia V.S."/>
            <person name="Walker M."/>
            <person name="Wu D."/>
            <person name="Yu G."/>
            <person name="Fraser C.M."/>
            <person name="Venter J.C."/>
            <person name="Davis R.W."/>
        </authorList>
    </citation>
    <scope>NUCLEOTIDE SEQUENCE [LARGE SCALE GENOMIC DNA]</scope>
    <source>
        <strain>cv. Columbia</strain>
    </source>
</reference>
<reference key="2">
    <citation type="journal article" date="2017" name="Plant J.">
        <title>Araport11: a complete reannotation of the Arabidopsis thaliana reference genome.</title>
        <authorList>
            <person name="Cheng C.Y."/>
            <person name="Krishnakumar V."/>
            <person name="Chan A.P."/>
            <person name="Thibaud-Nissen F."/>
            <person name="Schobel S."/>
            <person name="Town C.D."/>
        </authorList>
    </citation>
    <scope>GENOME REANNOTATION</scope>
    <source>
        <strain>cv. Columbia</strain>
    </source>
</reference>
<reference key="3">
    <citation type="journal article" date="2006" name="Plant Cell">
        <title>LOW PSII ACCUMULATION1 is involved in efficient assembly of photosystem II in Arabidopsis thaliana.</title>
        <authorList>
            <person name="Peng L."/>
            <person name="Ma J."/>
            <person name="Chi W."/>
            <person name="Guo J."/>
            <person name="Zhu S."/>
            <person name="Lu Q."/>
            <person name="Lu C."/>
            <person name="Zhang L."/>
        </authorList>
    </citation>
    <scope>FUNCTION</scope>
    <scope>INTERACTION WITH PSBA; PSBD; PETB AND ALB3</scope>
    <scope>DISRUPTION PHENOTYPE</scope>
    <scope>SUBCELLULAR LOCATION</scope>
</reference>
<reference key="4">
    <citation type="journal article" date="2007" name="Plant Cell">
        <title>LPA2 is required for efficient assembly of photosystem II in Arabidopsis thaliana.</title>
        <authorList>
            <person name="Ma J."/>
            <person name="Peng L."/>
            <person name="Guo J."/>
            <person name="Lu Q."/>
            <person name="Lu C."/>
            <person name="Zhang L."/>
        </authorList>
    </citation>
    <scope>RETRACTED PAPER</scope>
</reference>
<reference key="5">
    <citation type="journal article" date="2016" name="Plant Cell">
        <authorList>
            <person name="Ma J."/>
            <person name="Peng L."/>
            <person name="Guo J."/>
            <person name="Lu Q."/>
            <person name="Lu C."/>
            <person name="Zhang L."/>
        </authorList>
    </citation>
    <scope>RETRACTION NOTICE OF PUBMED:17601825</scope>
</reference>
<dbReference type="EMBL" id="AC009525">
    <property type="protein sequence ID" value="AAF02875.1"/>
    <property type="molecule type" value="Genomic_DNA"/>
</dbReference>
<dbReference type="EMBL" id="CP002684">
    <property type="protein sequence ID" value="AEE27495.1"/>
    <property type="molecule type" value="Genomic_DNA"/>
</dbReference>
<dbReference type="PIR" id="E86159">
    <property type="entry name" value="E86159"/>
</dbReference>
<dbReference type="RefSeq" id="NP_171790.1">
    <property type="nucleotide sequence ID" value="NM_100172.3"/>
</dbReference>
<dbReference type="SMR" id="Q9SRY4"/>
<dbReference type="BioGRID" id="24585">
    <property type="interactions" value="1"/>
</dbReference>
<dbReference type="FunCoup" id="Q9SRY4">
    <property type="interactions" value="1514"/>
</dbReference>
<dbReference type="STRING" id="3702.Q9SRY4"/>
<dbReference type="PaxDb" id="3702-AT1G02910.1"/>
<dbReference type="ProteomicsDB" id="238796"/>
<dbReference type="EnsemblPlants" id="AT1G02910.1">
    <property type="protein sequence ID" value="AT1G02910.1"/>
    <property type="gene ID" value="AT1G02910"/>
</dbReference>
<dbReference type="GeneID" id="839350"/>
<dbReference type="Gramene" id="AT1G02910.1">
    <property type="protein sequence ID" value="AT1G02910.1"/>
    <property type="gene ID" value="AT1G02910"/>
</dbReference>
<dbReference type="KEGG" id="ath:AT1G02910"/>
<dbReference type="Araport" id="AT1G02910"/>
<dbReference type="TAIR" id="AT1G02910">
    <property type="gene designation" value="LPA1"/>
</dbReference>
<dbReference type="eggNOG" id="ENOG502QQWZ">
    <property type="taxonomic scope" value="Eukaryota"/>
</dbReference>
<dbReference type="HOGENOM" id="CLU_042585_1_0_1"/>
<dbReference type="InParanoid" id="Q9SRY4"/>
<dbReference type="OMA" id="IWETAGN"/>
<dbReference type="OrthoDB" id="1914839at2759"/>
<dbReference type="PhylomeDB" id="Q9SRY4"/>
<dbReference type="PRO" id="PR:Q9SRY4"/>
<dbReference type="Proteomes" id="UP000006548">
    <property type="component" value="Chromosome 1"/>
</dbReference>
<dbReference type="ExpressionAtlas" id="Q9SRY4">
    <property type="expression patterns" value="baseline and differential"/>
</dbReference>
<dbReference type="GO" id="GO:0009507">
    <property type="term" value="C:chloroplast"/>
    <property type="evidence" value="ECO:0007005"/>
    <property type="project" value="TAIR"/>
</dbReference>
<dbReference type="GO" id="GO:0009535">
    <property type="term" value="C:chloroplast thylakoid membrane"/>
    <property type="evidence" value="ECO:0007669"/>
    <property type="project" value="UniProtKB-SubCell"/>
</dbReference>
<dbReference type="GO" id="GO:0005576">
    <property type="term" value="C:extracellular region"/>
    <property type="evidence" value="ECO:0007005"/>
    <property type="project" value="TAIR"/>
</dbReference>
<dbReference type="GO" id="GO:0010270">
    <property type="term" value="P:photosystem II oxygen evolving complex assembly"/>
    <property type="evidence" value="ECO:0000315"/>
    <property type="project" value="TAIR"/>
</dbReference>
<dbReference type="FunFam" id="1.25.40.10:FF:000290">
    <property type="entry name" value="Protein LOW PSII ACCUMULATION 1, chloroplastic"/>
    <property type="match status" value="1"/>
</dbReference>
<dbReference type="Gene3D" id="1.25.40.10">
    <property type="entry name" value="Tetratricopeptide repeat domain"/>
    <property type="match status" value="1"/>
</dbReference>
<dbReference type="InterPro" id="IPR021883">
    <property type="entry name" value="LPA1-like"/>
</dbReference>
<dbReference type="InterPro" id="IPR011990">
    <property type="entry name" value="TPR-like_helical_dom_sf"/>
</dbReference>
<dbReference type="InterPro" id="IPR019734">
    <property type="entry name" value="TPR_rpt"/>
</dbReference>
<dbReference type="NCBIfam" id="NF047558">
    <property type="entry name" value="TPR_END_plus"/>
    <property type="match status" value="1"/>
</dbReference>
<dbReference type="PANTHER" id="PTHR35498">
    <property type="entry name" value="PROTEIN LOW PSII ACCUMULATION 1, CHLOROPLASTIC"/>
    <property type="match status" value="1"/>
</dbReference>
<dbReference type="PANTHER" id="PTHR35498:SF4">
    <property type="entry name" value="PROTEIN LOW PSII ACCUMULATION 1, CHLOROPLASTIC"/>
    <property type="match status" value="1"/>
</dbReference>
<dbReference type="Pfam" id="PF11998">
    <property type="entry name" value="DUF3493"/>
    <property type="match status" value="1"/>
</dbReference>
<dbReference type="SUPFAM" id="SSF48452">
    <property type="entry name" value="TPR-like"/>
    <property type="match status" value="1"/>
</dbReference>
<dbReference type="PROSITE" id="PS50005">
    <property type="entry name" value="TPR"/>
    <property type="match status" value="1"/>
</dbReference>
<dbReference type="PROSITE" id="PS50293">
    <property type="entry name" value="TPR_REGION"/>
    <property type="match status" value="1"/>
</dbReference>
<keyword id="KW-0150">Chloroplast</keyword>
<keyword id="KW-0472">Membrane</keyword>
<keyword id="KW-0934">Plastid</keyword>
<keyword id="KW-1185">Reference proteome</keyword>
<keyword id="KW-0677">Repeat</keyword>
<keyword id="KW-0793">Thylakoid</keyword>
<keyword id="KW-0802">TPR repeat</keyword>
<keyword id="KW-0809">Transit peptide</keyword>
<keyword id="KW-0812">Transmembrane</keyword>
<keyword id="KW-1133">Transmembrane helix</keyword>
<protein>
    <recommendedName>
        <fullName>Protein LOW PSII ACCUMULATION 1, chloroplastic</fullName>
    </recommendedName>
</protein>
<sequence length="453" mass="50739">MAVATAPSLNRHFPRRISNLYSRVKQRRPWLPPGDATLFNSRRNWDSHLFVYASSSSSPSSSPPSPNSPTDDLTAELCVNTGLDLFKRGRVKDALVQFETALSLAPNPIESQAAYYNKACCHAYRGEGKKAVDCLRIALRDYNLKFATILNDPDLASFRALPEFKELQEEARLGGEDIGDNFRRDLKLISEVRAPFRGVRKFFYFAFAAAAGISMFFTVPRLVQAIRGGDGAPNLLETTGNAAINIGGIVVMVSLFLWENKKEEEQMVQITRDETLSRLPLRLSTNRVVELVQLRDTVRPVILAGKKETVTLAMQKADRFRTELLRRGVLLVPVVWGERKTPEIEKKGFGASSKAATSLPSIGEDFDTRAQSVVAQSKLKGEIRFKAETVSPGEWERWIRDQQISEGVNPGDDVYIILRLDGRVRRSGRGMPDWAEISKELPPMDDVLSKLER</sequence>